<organism>
    <name type="scientific">Homo sapiens</name>
    <name type="common">Human</name>
    <dbReference type="NCBI Taxonomy" id="9606"/>
    <lineage>
        <taxon>Eukaryota</taxon>
        <taxon>Metazoa</taxon>
        <taxon>Chordata</taxon>
        <taxon>Craniata</taxon>
        <taxon>Vertebrata</taxon>
        <taxon>Euteleostomi</taxon>
        <taxon>Mammalia</taxon>
        <taxon>Eutheria</taxon>
        <taxon>Euarchontoglires</taxon>
        <taxon>Primates</taxon>
        <taxon>Haplorrhini</taxon>
        <taxon>Catarrhini</taxon>
        <taxon>Hominidae</taxon>
        <taxon>Homo</taxon>
    </lineage>
</organism>
<comment type="function">
    <text evidence="2 3 4">May play a role in local mechanisms of mucosal immunity and seems to have a pro-inflammatory function. May play a role in inflammatory bowel disease. Activates STAT1 and STAT3, MAPK1/3 (ERK1/2), JUN and AKT. Induces expression of SOCS3, TNF-alpha and IL-8, secretion of IL-8 and IL-10 and surface expression of ICAM1. Decreases proliferation of intestinal epithelial cells. Is inhibited by heparin.</text>
</comment>
<comment type="subunit">
    <text>Homodimer.</text>
</comment>
<comment type="subcellular location">
    <subcellularLocation>
        <location evidence="4">Secreted</location>
    </subcellularLocation>
</comment>
<comment type="tissue specificity">
    <text evidence="4">Expressed in HVS transformed T-cells but not other T-cell lines or primary stimulated T-cells. Expressed in colonic T-cells including Th17 inflammatory T-cells; the expression is significantly increased in serum of patients with Crohn's disease (at protein level).</text>
</comment>
<comment type="induction">
    <text>By Herpesvirus saimiri infection.</text>
</comment>
<comment type="similarity">
    <text evidence="5">Belongs to the IL-10 family.</text>
</comment>
<comment type="online information" name="Wikipedia">
    <link uri="https://en.wikipedia.org/wiki/Interleukin_26"/>
    <text>Interleukin-26 entry</text>
</comment>
<accession>Q9NPH9</accession>
<name>IL26_HUMAN</name>
<keyword id="KW-0202">Cytokine</keyword>
<keyword id="KW-1267">Proteomics identification</keyword>
<keyword id="KW-1185">Reference proteome</keyword>
<keyword id="KW-0964">Secreted</keyword>
<keyword id="KW-0732">Signal</keyword>
<dbReference type="EMBL" id="AJ251550">
    <property type="protein sequence ID" value="CAB77049.1"/>
    <property type="molecule type" value="Genomic_DNA"/>
</dbReference>
<dbReference type="EMBL" id="AJ251551">
    <property type="protein sequence ID" value="CAB77049.1"/>
    <property type="status" value="JOINED"/>
    <property type="molecule type" value="Genomic_DNA"/>
</dbReference>
<dbReference type="EMBL" id="AJ251549">
    <property type="protein sequence ID" value="CAB76942.1"/>
    <property type="molecule type" value="mRNA"/>
</dbReference>
<dbReference type="EMBL" id="AY509906">
    <property type="protein sequence ID" value="AAR87776.1"/>
    <property type="molecule type" value="Genomic_DNA"/>
</dbReference>
<dbReference type="EMBL" id="BC066270">
    <property type="protein sequence ID" value="AAH66270.1"/>
    <property type="molecule type" value="mRNA"/>
</dbReference>
<dbReference type="EMBL" id="BC066271">
    <property type="protein sequence ID" value="AAH66271.1"/>
    <property type="molecule type" value="mRNA"/>
</dbReference>
<dbReference type="CCDS" id="CCDS8981.1"/>
<dbReference type="RefSeq" id="NP_060872.1">
    <property type="nucleotide sequence ID" value="NM_018402.2"/>
</dbReference>
<dbReference type="SMR" id="Q9NPH9"/>
<dbReference type="BioGRID" id="120913">
    <property type="interactions" value="17"/>
</dbReference>
<dbReference type="ComplexPortal" id="CPX-10316">
    <property type="entry name" value="Interleukin-26 receptor-ligand complex"/>
</dbReference>
<dbReference type="ComplexPortal" id="CPX-10317">
    <property type="entry name" value="Interleukin-26 complex"/>
</dbReference>
<dbReference type="FunCoup" id="Q9NPH9">
    <property type="interactions" value="371"/>
</dbReference>
<dbReference type="IntAct" id="Q9NPH9">
    <property type="interactions" value="5"/>
</dbReference>
<dbReference type="STRING" id="9606.ENSP00000229134"/>
<dbReference type="iPTMnet" id="Q9NPH9"/>
<dbReference type="PhosphoSitePlus" id="Q9NPH9"/>
<dbReference type="BioMuta" id="IL26"/>
<dbReference type="DMDM" id="17366984"/>
<dbReference type="MassIVE" id="Q9NPH9"/>
<dbReference type="PaxDb" id="9606-ENSP00000229134"/>
<dbReference type="PeptideAtlas" id="Q9NPH9"/>
<dbReference type="ProteomicsDB" id="82013"/>
<dbReference type="Antibodypedia" id="29298">
    <property type="antibodies" value="245 antibodies from 26 providers"/>
</dbReference>
<dbReference type="DNASU" id="55801"/>
<dbReference type="Ensembl" id="ENST00000229134.5">
    <property type="protein sequence ID" value="ENSP00000229134.4"/>
    <property type="gene ID" value="ENSG00000111536.5"/>
</dbReference>
<dbReference type="GeneID" id="55801"/>
<dbReference type="KEGG" id="hsa:55801"/>
<dbReference type="MANE-Select" id="ENST00000229134.5">
    <property type="protein sequence ID" value="ENSP00000229134.4"/>
    <property type="RefSeq nucleotide sequence ID" value="NM_018402.2"/>
    <property type="RefSeq protein sequence ID" value="NP_060872.1"/>
</dbReference>
<dbReference type="UCSC" id="uc001stx.2">
    <property type="organism name" value="human"/>
</dbReference>
<dbReference type="AGR" id="HGNC:17119"/>
<dbReference type="CTD" id="55801"/>
<dbReference type="DisGeNET" id="55801"/>
<dbReference type="GeneCards" id="IL26"/>
<dbReference type="HGNC" id="HGNC:17119">
    <property type="gene designation" value="IL26"/>
</dbReference>
<dbReference type="HPA" id="ENSG00000111536">
    <property type="expression patterns" value="Not detected"/>
</dbReference>
<dbReference type="MIM" id="605679">
    <property type="type" value="gene"/>
</dbReference>
<dbReference type="neXtProt" id="NX_Q9NPH9"/>
<dbReference type="OpenTargets" id="ENSG00000111536"/>
<dbReference type="PharmGKB" id="PA29826"/>
<dbReference type="VEuPathDB" id="HostDB:ENSG00000111536"/>
<dbReference type="eggNOG" id="ENOG502S3YD">
    <property type="taxonomic scope" value="Eukaryota"/>
</dbReference>
<dbReference type="GeneTree" id="ENSGT00950000183124"/>
<dbReference type="HOGENOM" id="CLU_1598376_0_0_1"/>
<dbReference type="InParanoid" id="Q9NPH9"/>
<dbReference type="OMA" id="CKEIHFV"/>
<dbReference type="OrthoDB" id="9289879at2759"/>
<dbReference type="PAN-GO" id="Q9NPH9">
    <property type="GO annotations" value="2 GO annotations based on evolutionary models"/>
</dbReference>
<dbReference type="PhylomeDB" id="Q9NPH9"/>
<dbReference type="TreeFam" id="TF333253"/>
<dbReference type="PathwayCommons" id="Q9NPH9"/>
<dbReference type="Reactome" id="R-HSA-8854691">
    <property type="pathway name" value="Interleukin-20 family signaling"/>
</dbReference>
<dbReference type="SignaLink" id="Q9NPH9"/>
<dbReference type="SIGNOR" id="Q9NPH9"/>
<dbReference type="BioGRID-ORCS" id="55801">
    <property type="hits" value="9 hits in 1136 CRISPR screens"/>
</dbReference>
<dbReference type="GeneWiki" id="Interleukin_26"/>
<dbReference type="GenomeRNAi" id="55801"/>
<dbReference type="Pharos" id="Q9NPH9">
    <property type="development level" value="Tbio"/>
</dbReference>
<dbReference type="PRO" id="PR:Q9NPH9"/>
<dbReference type="Proteomes" id="UP000005640">
    <property type="component" value="Chromosome 12"/>
</dbReference>
<dbReference type="RNAct" id="Q9NPH9">
    <property type="molecule type" value="protein"/>
</dbReference>
<dbReference type="Bgee" id="ENSG00000111536">
    <property type="expression patterns" value="Expressed in vermiform appendix and 38 other cell types or tissues"/>
</dbReference>
<dbReference type="GO" id="GO:0005829">
    <property type="term" value="C:cytosol"/>
    <property type="evidence" value="ECO:0000314"/>
    <property type="project" value="UniProtKB"/>
</dbReference>
<dbReference type="GO" id="GO:0005576">
    <property type="term" value="C:extracellular region"/>
    <property type="evidence" value="ECO:0000304"/>
    <property type="project" value="Reactome"/>
</dbReference>
<dbReference type="GO" id="GO:0005615">
    <property type="term" value="C:extracellular space"/>
    <property type="evidence" value="ECO:0000314"/>
    <property type="project" value="UniProtKB"/>
</dbReference>
<dbReference type="GO" id="GO:0005125">
    <property type="term" value="F:cytokine activity"/>
    <property type="evidence" value="ECO:0000314"/>
    <property type="project" value="UniProtKB"/>
</dbReference>
<dbReference type="GO" id="GO:0007267">
    <property type="term" value="P:cell-cell signaling"/>
    <property type="evidence" value="ECO:0000304"/>
    <property type="project" value="ProtInc"/>
</dbReference>
<dbReference type="GO" id="GO:0006955">
    <property type="term" value="P:immune response"/>
    <property type="evidence" value="ECO:0000318"/>
    <property type="project" value="GO_Central"/>
</dbReference>
<dbReference type="GO" id="GO:0050680">
    <property type="term" value="P:negative regulation of epithelial cell proliferation"/>
    <property type="evidence" value="ECO:0000314"/>
    <property type="project" value="UniProtKB"/>
</dbReference>
<dbReference type="GO" id="GO:0001819">
    <property type="term" value="P:positive regulation of cytokine production"/>
    <property type="evidence" value="ECO:0000314"/>
    <property type="project" value="UniProtKB"/>
</dbReference>
<dbReference type="GO" id="GO:0070374">
    <property type="term" value="P:positive regulation of ERK1 and ERK2 cascade"/>
    <property type="evidence" value="ECO:0000314"/>
    <property type="project" value="UniProtKB"/>
</dbReference>
<dbReference type="GO" id="GO:0051897">
    <property type="term" value="P:positive regulation of phosphatidylinositol 3-kinase/protein kinase B signal transduction"/>
    <property type="evidence" value="ECO:0000314"/>
    <property type="project" value="UniProtKB"/>
</dbReference>
<dbReference type="GO" id="GO:0046427">
    <property type="term" value="P:positive regulation of receptor signaling pathway via JAK-STAT"/>
    <property type="evidence" value="ECO:0000314"/>
    <property type="project" value="UniProtKB"/>
</dbReference>
<dbReference type="GO" id="GO:0032874">
    <property type="term" value="P:positive regulation of stress-activated MAPK cascade"/>
    <property type="evidence" value="ECO:0000314"/>
    <property type="project" value="UniProtKB"/>
</dbReference>
<dbReference type="GO" id="GO:0045944">
    <property type="term" value="P:positive regulation of transcription by RNA polymerase II"/>
    <property type="evidence" value="ECO:0000314"/>
    <property type="project" value="UniProtKB"/>
</dbReference>
<dbReference type="FunFam" id="1.20.1250.10:FF:000040">
    <property type="entry name" value="Interleukin 26"/>
    <property type="match status" value="1"/>
</dbReference>
<dbReference type="Gene3D" id="1.20.1250.10">
    <property type="match status" value="1"/>
</dbReference>
<dbReference type="InterPro" id="IPR009079">
    <property type="entry name" value="4_helix_cytokine-like_core"/>
</dbReference>
<dbReference type="InterPro" id="IPR020443">
    <property type="entry name" value="IL-10/19/20/24/26"/>
</dbReference>
<dbReference type="InterPro" id="IPR020423">
    <property type="entry name" value="IL-10_CS"/>
</dbReference>
<dbReference type="PANTHER" id="PTHR48482">
    <property type="entry name" value="INTERLEUKIN-19-RELATED"/>
    <property type="match status" value="1"/>
</dbReference>
<dbReference type="PANTHER" id="PTHR48482:SF1">
    <property type="entry name" value="INTERLEUKIN-26"/>
    <property type="match status" value="1"/>
</dbReference>
<dbReference type="Pfam" id="PF00726">
    <property type="entry name" value="IL10"/>
    <property type="match status" value="1"/>
</dbReference>
<dbReference type="SUPFAM" id="SSF47266">
    <property type="entry name" value="4-helical cytokines"/>
    <property type="match status" value="1"/>
</dbReference>
<dbReference type="PROSITE" id="PS00520">
    <property type="entry name" value="INTERLEUKIN_10"/>
    <property type="match status" value="1"/>
</dbReference>
<protein>
    <recommendedName>
        <fullName>Interleukin-26</fullName>
        <shortName>IL-26</shortName>
    </recommendedName>
    <alternativeName>
        <fullName>Protein AK155</fullName>
    </alternativeName>
</protein>
<reference key="1">
    <citation type="journal article" date="2000" name="J. Virol.">
        <title>Induction of a novel cellular homolog of interleukin-10, AK155, by transformation of T lymphocytes with herpesvirus saimiri.</title>
        <authorList>
            <person name="Knappe A."/>
            <person name="Hor S."/>
            <person name="Wittmann S."/>
            <person name="Fickenscher H."/>
        </authorList>
    </citation>
    <scope>NUCLEOTIDE SEQUENCE [GENOMIC DNA / MRNA]</scope>
</reference>
<reference key="2">
    <citation type="submission" date="2003-12" db="EMBL/GenBank/DDBJ databases">
        <authorList>
            <consortium name="SeattleSNPs variation discovery resource"/>
        </authorList>
    </citation>
    <scope>NUCLEOTIDE SEQUENCE [GENOMIC DNA]</scope>
</reference>
<reference key="3">
    <citation type="journal article" date="2004" name="Genome Res.">
        <title>The status, quality, and expansion of the NIH full-length cDNA project: the Mammalian Gene Collection (MGC).</title>
        <authorList>
            <consortium name="The MGC Project Team"/>
        </authorList>
    </citation>
    <scope>NUCLEOTIDE SEQUENCE [LARGE SCALE MRNA]</scope>
</reference>
<reference key="4">
    <citation type="journal article" date="2004" name="J. Biol. Chem.">
        <title>The T-cell lymphokine interleukin-26 targets epithelial cells through the interleukin-20 receptor 1 and interleukin-10 receptor 2 chains.</title>
        <authorList>
            <person name="Hor S."/>
            <person name="Pirzer H."/>
            <person name="Dumoutier L."/>
            <person name="Bauer F."/>
            <person name="Wittmann S."/>
            <person name="Sticht H."/>
            <person name="Renauld J.C."/>
            <person name="de Waal Malefyt R."/>
            <person name="Fickenscher H."/>
        </authorList>
    </citation>
    <scope>FUNCTION</scope>
</reference>
<reference key="5">
    <citation type="journal article" date="2004" name="J. Immunol.">
        <title>IL-26 signals through a novel receptor complex composed of IL-20 receptor 1 and IL-10 receptor 2.</title>
        <authorList>
            <person name="Sheikh F."/>
            <person name="Baurin V.V."/>
            <person name="Lewis-Antes A."/>
            <person name="Shah N.K."/>
            <person name="Smirnov S.V."/>
            <person name="Anantha S."/>
            <person name="Dickensheets H."/>
            <person name="Dumoutier L."/>
            <person name="Renauld J.-C."/>
            <person name="Zdanov A."/>
            <person name="Donnelly R.P."/>
            <person name="Kotenko S.V."/>
        </authorList>
    </citation>
    <scope>FUNCTION</scope>
    <scope>RECEPTOR-BINDING</scope>
</reference>
<reference key="6">
    <citation type="journal article" date="2009" name="Gut">
        <title>The role of the novel Th17 cytokine IL-26 in intestinal inflammation.</title>
        <authorList>
            <person name="Dambacher J."/>
            <person name="Beigel F."/>
            <person name="Zitzmann K."/>
            <person name="De Toni E.N."/>
            <person name="Goke B."/>
            <person name="Diepolder H.M."/>
            <person name="Auernhammer C.J."/>
            <person name="Brand S."/>
        </authorList>
    </citation>
    <scope>FUNCTION</scope>
    <scope>TISSUE SPECIFICITY</scope>
    <scope>SUBCELLULAR LOCATION</scope>
</reference>
<proteinExistence type="evidence at protein level"/>
<sequence>MLVNFILRCGLLLVTLSLAIAKHKQSSFTKSCYPRGTLSQAVDALYIKAAWLKATIPEDRIKNIRLLKKKTKKQFMKNCQFQEQLLSFFMEDVFGQLQLQGCKKIRFVEDFHSLRQKLSHCISCASSAREMKSITRMKRIFYRIGNKGIYKAISELDILLSWIKKLLESSQ</sequence>
<feature type="signal peptide" evidence="1">
    <location>
        <begin position="1"/>
        <end position="21"/>
    </location>
</feature>
<feature type="chain" id="PRO_0000015387" description="Interleukin-26">
    <location>
        <begin position="22"/>
        <end position="171"/>
    </location>
</feature>
<evidence type="ECO:0000255" key="1"/>
<evidence type="ECO:0000269" key="2">
    <source>
    </source>
</evidence>
<evidence type="ECO:0000269" key="3">
    <source>
    </source>
</evidence>
<evidence type="ECO:0000269" key="4">
    <source>
    </source>
</evidence>
<evidence type="ECO:0000305" key="5"/>
<gene>
    <name type="primary">IL26</name>
    <name type="synonym">AK155</name>
</gene>